<keyword id="KW-1003">Cell membrane</keyword>
<keyword id="KW-0413">Isomerase</keyword>
<keyword id="KW-0449">Lipoprotein</keyword>
<keyword id="KW-0472">Membrane</keyword>
<keyword id="KW-0564">Palmitate</keyword>
<keyword id="KW-0697">Rotamase</keyword>
<keyword id="KW-0732">Signal</keyword>
<protein>
    <recommendedName>
        <fullName>Foldase protein PrsA 2</fullName>
        <ecNumber>5.2.1.8</ecNumber>
    </recommendedName>
</protein>
<name>PRSA2_STRP3</name>
<feature type="signal peptide" evidence="2">
    <location>
        <begin position="1"/>
        <end position="22"/>
    </location>
</feature>
<feature type="chain" id="PRO_0000029332" description="Foldase protein PrsA 2">
    <location>
        <begin position="23"/>
        <end position="309"/>
    </location>
</feature>
<feature type="domain" description="PpiC">
    <location>
        <begin position="146"/>
        <end position="241"/>
    </location>
</feature>
<feature type="lipid moiety-binding region" description="N-palmitoyl cysteine" evidence="2">
    <location>
        <position position="23"/>
    </location>
</feature>
<feature type="lipid moiety-binding region" description="S-diacylglycerol cysteine" evidence="2">
    <location>
        <position position="23"/>
    </location>
</feature>
<evidence type="ECO:0000250" key="1"/>
<evidence type="ECO:0000255" key="2"/>
<evidence type="ECO:0000305" key="3"/>
<sequence>MKQMNKLITGVVTLATVVTLSACQSSHNNTKLVSMKGDTITVSDFYNETKNTELAQKAMLSLVISRVFETQYANKVSDKEVEKAYKQTADQYGTSFKTVLAQSGLTPETYKKQIRLTKLVEYAVKEQAKNETISKKDYRQAYDAYTPTMTAEIMQFEKEEDAKAALEAVKAEGADFAAIAKEKTIAADKKTTYTFDSGETTLPAEVVRAASGLKEGNRSEIITALDPATSKRTYHIIKVTKKATKKADWKAYQKRLKDIIVTGKLKDPDFQNKVIAKALDKANVKIKDKAFANILAQFAKPNQKQPAQK</sequence>
<gene>
    <name type="primary">prsA2</name>
    <name type="ordered locus">SpyM3_1740</name>
</gene>
<accession>P0DD44</accession>
<accession>Q8K5P3</accession>
<organism>
    <name type="scientific">Streptococcus pyogenes serotype M3 (strain ATCC BAA-595 / MGAS315)</name>
    <dbReference type="NCBI Taxonomy" id="198466"/>
    <lineage>
        <taxon>Bacteria</taxon>
        <taxon>Bacillati</taxon>
        <taxon>Bacillota</taxon>
        <taxon>Bacilli</taxon>
        <taxon>Lactobacillales</taxon>
        <taxon>Streptococcaceae</taxon>
        <taxon>Streptococcus</taxon>
    </lineage>
</organism>
<reference key="1">
    <citation type="journal article" date="2002" name="Proc. Natl. Acad. Sci. U.S.A.">
        <title>Genome sequence of a serotype M3 strain of group A Streptococcus: phage-encoded toxins, the high-virulence phenotype, and clone emergence.</title>
        <authorList>
            <person name="Beres S.B."/>
            <person name="Sylva G.L."/>
            <person name="Barbian K.D."/>
            <person name="Lei B."/>
            <person name="Hoff J.S."/>
            <person name="Mammarella N.D."/>
            <person name="Liu M.-Y."/>
            <person name="Smoot J.C."/>
            <person name="Porcella S.F."/>
            <person name="Parkins L.D."/>
            <person name="Campbell D.S."/>
            <person name="Smith T.M."/>
            <person name="McCormick J.K."/>
            <person name="Leung D.Y.M."/>
            <person name="Schlievert P.M."/>
            <person name="Musser J.M."/>
        </authorList>
    </citation>
    <scope>NUCLEOTIDE SEQUENCE [LARGE SCALE GENOMIC DNA]</scope>
    <source>
        <strain>ATCC BAA-595 / MGAS315</strain>
    </source>
</reference>
<proteinExistence type="inferred from homology"/>
<dbReference type="EC" id="5.2.1.8"/>
<dbReference type="EMBL" id="AE014074">
    <property type="protein sequence ID" value="AAM80347.1"/>
    <property type="molecule type" value="Genomic_DNA"/>
</dbReference>
<dbReference type="SMR" id="P0DD44"/>
<dbReference type="KEGG" id="spg:SpyM3_1740"/>
<dbReference type="HOGENOM" id="CLU_034646_6_0_9"/>
<dbReference type="Proteomes" id="UP000000564">
    <property type="component" value="Chromosome"/>
</dbReference>
<dbReference type="GO" id="GO:0005886">
    <property type="term" value="C:plasma membrane"/>
    <property type="evidence" value="ECO:0007669"/>
    <property type="project" value="UniProtKB-SubCell"/>
</dbReference>
<dbReference type="GO" id="GO:0003755">
    <property type="term" value="F:peptidyl-prolyl cis-trans isomerase activity"/>
    <property type="evidence" value="ECO:0007669"/>
    <property type="project" value="UniProtKB-UniRule"/>
</dbReference>
<dbReference type="GO" id="GO:0006457">
    <property type="term" value="P:protein folding"/>
    <property type="evidence" value="ECO:0007669"/>
    <property type="project" value="UniProtKB-UniRule"/>
</dbReference>
<dbReference type="Gene3D" id="3.10.50.40">
    <property type="match status" value="1"/>
</dbReference>
<dbReference type="Gene3D" id="1.10.4030.10">
    <property type="entry name" value="Porin chaperone SurA, peptide-binding domain"/>
    <property type="match status" value="1"/>
</dbReference>
<dbReference type="HAMAP" id="MF_01145">
    <property type="entry name" value="Foldase_PrsA"/>
    <property type="match status" value="1"/>
</dbReference>
<dbReference type="InterPro" id="IPR023059">
    <property type="entry name" value="Foldase_PrsA"/>
</dbReference>
<dbReference type="InterPro" id="IPR046357">
    <property type="entry name" value="PPIase_dom_sf"/>
</dbReference>
<dbReference type="InterPro" id="IPR000297">
    <property type="entry name" value="PPIase_PpiC"/>
</dbReference>
<dbReference type="InterPro" id="IPR050245">
    <property type="entry name" value="PrsA_foldase"/>
</dbReference>
<dbReference type="InterPro" id="IPR027304">
    <property type="entry name" value="Trigger_fact/SurA_dom_sf"/>
</dbReference>
<dbReference type="NCBIfam" id="NF002361">
    <property type="entry name" value="PRK01326.1"/>
    <property type="match status" value="1"/>
</dbReference>
<dbReference type="NCBIfam" id="NF009105">
    <property type="entry name" value="PRK12450.1"/>
    <property type="match status" value="1"/>
</dbReference>
<dbReference type="PANTHER" id="PTHR47245:SF1">
    <property type="entry name" value="FOLDASE PROTEIN PRSA"/>
    <property type="match status" value="1"/>
</dbReference>
<dbReference type="PANTHER" id="PTHR47245">
    <property type="entry name" value="PEPTIDYLPROLYL ISOMERASE"/>
    <property type="match status" value="1"/>
</dbReference>
<dbReference type="Pfam" id="PF13145">
    <property type="entry name" value="Rotamase_2"/>
    <property type="match status" value="1"/>
</dbReference>
<dbReference type="SUPFAM" id="SSF54534">
    <property type="entry name" value="FKBP-like"/>
    <property type="match status" value="1"/>
</dbReference>
<dbReference type="SUPFAM" id="SSF109998">
    <property type="entry name" value="Triger factor/SurA peptide-binding domain-like"/>
    <property type="match status" value="1"/>
</dbReference>
<dbReference type="PROSITE" id="PS50198">
    <property type="entry name" value="PPIC_PPIASE_2"/>
    <property type="match status" value="1"/>
</dbReference>
<dbReference type="PROSITE" id="PS51257">
    <property type="entry name" value="PROKAR_LIPOPROTEIN"/>
    <property type="match status" value="1"/>
</dbReference>
<comment type="function">
    <text evidence="1">Plays a major role in protein secretion by helping the post-translocational extracellular folding of several secreted proteins.</text>
</comment>
<comment type="catalytic activity">
    <reaction>
        <text>[protein]-peptidylproline (omega=180) = [protein]-peptidylproline (omega=0)</text>
        <dbReference type="Rhea" id="RHEA:16237"/>
        <dbReference type="Rhea" id="RHEA-COMP:10747"/>
        <dbReference type="Rhea" id="RHEA-COMP:10748"/>
        <dbReference type="ChEBI" id="CHEBI:83833"/>
        <dbReference type="ChEBI" id="CHEBI:83834"/>
        <dbReference type="EC" id="5.2.1.8"/>
    </reaction>
</comment>
<comment type="subcellular location">
    <subcellularLocation>
        <location evidence="3">Cell membrane</location>
        <topology evidence="3">Lipid-anchor</topology>
    </subcellularLocation>
</comment>
<comment type="similarity">
    <text evidence="3">Belongs to the PrsA family.</text>
</comment>